<dbReference type="EC" id="2.7.7.6" evidence="1"/>
<dbReference type="EMBL" id="CP001600">
    <property type="protein sequence ID" value="ACR67421.1"/>
    <property type="molecule type" value="Genomic_DNA"/>
</dbReference>
<dbReference type="RefSeq" id="WP_015869633.1">
    <property type="nucleotide sequence ID" value="NZ_CP169062.1"/>
</dbReference>
<dbReference type="SMR" id="C5BHE3"/>
<dbReference type="STRING" id="67780.B6E78_12030"/>
<dbReference type="GeneID" id="69537281"/>
<dbReference type="KEGG" id="eic:NT01EI_0174"/>
<dbReference type="PATRIC" id="fig|634503.3.peg.157"/>
<dbReference type="HOGENOM" id="CLU_000524_4_0_6"/>
<dbReference type="OrthoDB" id="9803954at2"/>
<dbReference type="Proteomes" id="UP000001485">
    <property type="component" value="Chromosome"/>
</dbReference>
<dbReference type="GO" id="GO:0000428">
    <property type="term" value="C:DNA-directed RNA polymerase complex"/>
    <property type="evidence" value="ECO:0007669"/>
    <property type="project" value="UniProtKB-KW"/>
</dbReference>
<dbReference type="GO" id="GO:0003677">
    <property type="term" value="F:DNA binding"/>
    <property type="evidence" value="ECO:0007669"/>
    <property type="project" value="UniProtKB-UniRule"/>
</dbReference>
<dbReference type="GO" id="GO:0003899">
    <property type="term" value="F:DNA-directed RNA polymerase activity"/>
    <property type="evidence" value="ECO:0007669"/>
    <property type="project" value="UniProtKB-UniRule"/>
</dbReference>
<dbReference type="GO" id="GO:0032549">
    <property type="term" value="F:ribonucleoside binding"/>
    <property type="evidence" value="ECO:0007669"/>
    <property type="project" value="InterPro"/>
</dbReference>
<dbReference type="GO" id="GO:0006351">
    <property type="term" value="P:DNA-templated transcription"/>
    <property type="evidence" value="ECO:0007669"/>
    <property type="project" value="UniProtKB-UniRule"/>
</dbReference>
<dbReference type="CDD" id="cd00653">
    <property type="entry name" value="RNA_pol_B_RPB2"/>
    <property type="match status" value="1"/>
</dbReference>
<dbReference type="FunFam" id="2.30.150.10:FF:000001">
    <property type="entry name" value="DNA-directed RNA polymerase subunit beta"/>
    <property type="match status" value="1"/>
</dbReference>
<dbReference type="FunFam" id="2.40.270.10:FF:000003">
    <property type="entry name" value="DNA-directed RNA polymerase subunit beta"/>
    <property type="match status" value="1"/>
</dbReference>
<dbReference type="FunFam" id="2.40.270.10:FF:000004">
    <property type="entry name" value="DNA-directed RNA polymerase subunit beta"/>
    <property type="match status" value="1"/>
</dbReference>
<dbReference type="FunFam" id="2.40.50.100:FF:000006">
    <property type="entry name" value="DNA-directed RNA polymerase subunit beta"/>
    <property type="match status" value="1"/>
</dbReference>
<dbReference type="FunFam" id="2.40.50.150:FF:000001">
    <property type="entry name" value="DNA-directed RNA polymerase subunit beta"/>
    <property type="match status" value="1"/>
</dbReference>
<dbReference type="FunFam" id="3.90.1100.10:FF:000002">
    <property type="entry name" value="DNA-directed RNA polymerase subunit beta"/>
    <property type="match status" value="1"/>
</dbReference>
<dbReference type="FunFam" id="3.90.1110.10:FF:000001">
    <property type="entry name" value="DNA-directed RNA polymerase subunit beta"/>
    <property type="match status" value="1"/>
</dbReference>
<dbReference type="FunFam" id="3.90.1110.10:FF:000004">
    <property type="entry name" value="DNA-directed RNA polymerase subunit beta"/>
    <property type="match status" value="1"/>
</dbReference>
<dbReference type="FunFam" id="3.90.1800.10:FF:000001">
    <property type="entry name" value="DNA-directed RNA polymerase subunit beta"/>
    <property type="match status" value="1"/>
</dbReference>
<dbReference type="Gene3D" id="2.40.50.100">
    <property type="match status" value="1"/>
</dbReference>
<dbReference type="Gene3D" id="2.40.50.150">
    <property type="match status" value="1"/>
</dbReference>
<dbReference type="Gene3D" id="3.90.1100.10">
    <property type="match status" value="2"/>
</dbReference>
<dbReference type="Gene3D" id="6.10.140.1670">
    <property type="match status" value="1"/>
</dbReference>
<dbReference type="Gene3D" id="2.30.150.10">
    <property type="entry name" value="DNA-directed RNA polymerase, beta subunit, external 1 domain"/>
    <property type="match status" value="1"/>
</dbReference>
<dbReference type="Gene3D" id="2.40.270.10">
    <property type="entry name" value="DNA-directed RNA polymerase, subunit 2, domain 6"/>
    <property type="match status" value="1"/>
</dbReference>
<dbReference type="Gene3D" id="3.90.1800.10">
    <property type="entry name" value="RNA polymerase alpha subunit dimerisation domain"/>
    <property type="match status" value="1"/>
</dbReference>
<dbReference type="Gene3D" id="3.90.1110.10">
    <property type="entry name" value="RNA polymerase Rpb2, domain 2"/>
    <property type="match status" value="1"/>
</dbReference>
<dbReference type="HAMAP" id="MF_01321">
    <property type="entry name" value="RNApol_bact_RpoB"/>
    <property type="match status" value="1"/>
</dbReference>
<dbReference type="InterPro" id="IPR042107">
    <property type="entry name" value="DNA-dir_RNA_pol_bsu_ext_1_sf"/>
</dbReference>
<dbReference type="InterPro" id="IPR019462">
    <property type="entry name" value="DNA-dir_RNA_pol_bsu_external_1"/>
</dbReference>
<dbReference type="InterPro" id="IPR015712">
    <property type="entry name" value="DNA-dir_RNA_pol_su2"/>
</dbReference>
<dbReference type="InterPro" id="IPR007120">
    <property type="entry name" value="DNA-dir_RNAP_su2_dom"/>
</dbReference>
<dbReference type="InterPro" id="IPR037033">
    <property type="entry name" value="DNA-dir_RNAP_su2_hyb_sf"/>
</dbReference>
<dbReference type="InterPro" id="IPR010243">
    <property type="entry name" value="RNA_pol_bsu_bac"/>
</dbReference>
<dbReference type="InterPro" id="IPR007121">
    <property type="entry name" value="RNA_pol_bsu_CS"/>
</dbReference>
<dbReference type="InterPro" id="IPR007644">
    <property type="entry name" value="RNA_pol_bsu_protrusion"/>
</dbReference>
<dbReference type="InterPro" id="IPR007642">
    <property type="entry name" value="RNA_pol_Rpb2_2"/>
</dbReference>
<dbReference type="InterPro" id="IPR037034">
    <property type="entry name" value="RNA_pol_Rpb2_2_sf"/>
</dbReference>
<dbReference type="InterPro" id="IPR007645">
    <property type="entry name" value="RNA_pol_Rpb2_3"/>
</dbReference>
<dbReference type="InterPro" id="IPR007641">
    <property type="entry name" value="RNA_pol_Rpb2_7"/>
</dbReference>
<dbReference type="InterPro" id="IPR014724">
    <property type="entry name" value="RNA_pol_RPB2_OB-fold"/>
</dbReference>
<dbReference type="NCBIfam" id="NF001616">
    <property type="entry name" value="PRK00405.1"/>
    <property type="match status" value="1"/>
</dbReference>
<dbReference type="NCBIfam" id="TIGR02013">
    <property type="entry name" value="rpoB"/>
    <property type="match status" value="1"/>
</dbReference>
<dbReference type="PANTHER" id="PTHR20856">
    <property type="entry name" value="DNA-DIRECTED RNA POLYMERASE I SUBUNIT 2"/>
    <property type="match status" value="1"/>
</dbReference>
<dbReference type="Pfam" id="PF04563">
    <property type="entry name" value="RNA_pol_Rpb2_1"/>
    <property type="match status" value="1"/>
</dbReference>
<dbReference type="Pfam" id="PF04561">
    <property type="entry name" value="RNA_pol_Rpb2_2"/>
    <property type="match status" value="2"/>
</dbReference>
<dbReference type="Pfam" id="PF04565">
    <property type="entry name" value="RNA_pol_Rpb2_3"/>
    <property type="match status" value="1"/>
</dbReference>
<dbReference type="Pfam" id="PF10385">
    <property type="entry name" value="RNA_pol_Rpb2_45"/>
    <property type="match status" value="1"/>
</dbReference>
<dbReference type="Pfam" id="PF00562">
    <property type="entry name" value="RNA_pol_Rpb2_6"/>
    <property type="match status" value="1"/>
</dbReference>
<dbReference type="Pfam" id="PF04560">
    <property type="entry name" value="RNA_pol_Rpb2_7"/>
    <property type="match status" value="1"/>
</dbReference>
<dbReference type="SUPFAM" id="SSF64484">
    <property type="entry name" value="beta and beta-prime subunits of DNA dependent RNA-polymerase"/>
    <property type="match status" value="1"/>
</dbReference>
<dbReference type="PROSITE" id="PS01166">
    <property type="entry name" value="RNA_POL_BETA"/>
    <property type="match status" value="1"/>
</dbReference>
<protein>
    <recommendedName>
        <fullName evidence="1">DNA-directed RNA polymerase subunit beta</fullName>
        <shortName evidence="1">RNAP subunit beta</shortName>
        <ecNumber evidence="1">2.7.7.6</ecNumber>
    </recommendedName>
    <alternativeName>
        <fullName evidence="1">RNA polymerase subunit beta</fullName>
    </alternativeName>
    <alternativeName>
        <fullName evidence="1">Transcriptase subunit beta</fullName>
    </alternativeName>
</protein>
<reference key="1">
    <citation type="submission" date="2009-03" db="EMBL/GenBank/DDBJ databases">
        <title>Complete genome sequence of Edwardsiella ictaluri 93-146.</title>
        <authorList>
            <person name="Williams M.L."/>
            <person name="Gillaspy A.F."/>
            <person name="Dyer D.W."/>
            <person name="Thune R.L."/>
            <person name="Waldbieser G.C."/>
            <person name="Schuster S.C."/>
            <person name="Gipson J."/>
            <person name="Zaitshik J."/>
            <person name="Landry C."/>
            <person name="Lawrence M.L."/>
        </authorList>
    </citation>
    <scope>NUCLEOTIDE SEQUENCE [LARGE SCALE GENOMIC DNA]</scope>
    <source>
        <strain>93-146</strain>
    </source>
</reference>
<proteinExistence type="inferred from homology"/>
<accession>C5BHE3</accession>
<feature type="chain" id="PRO_1000214477" description="DNA-directed RNA polymerase subunit beta">
    <location>
        <begin position="1"/>
        <end position="1342"/>
    </location>
</feature>
<evidence type="ECO:0000255" key="1">
    <source>
        <dbReference type="HAMAP-Rule" id="MF_01321"/>
    </source>
</evidence>
<sequence>MVYSYTEKKRIRKDFGKRPQVLDVPYLLSIQLDSFQKFIEQDPEGQYGLEAAFRSVFPIQSYSGNSELQYVSYRLGEPVFDVKECQIRGVTYSAPLRVKLRLVIYEREAPEGTVKDIKEQEVYMGEIPLMTENGTFVINGTERVIVSQLHRSPGVFFDSDKGKTHSSGKVLYNARIIPYRGSWLDFEFDPKDNLFVRIDRRRKLPATIILRALDFTTEQILDLFFDKVIFEIRDNKLQMELVPERLRGETASFDIEANGKVYVEKGRRITARHIRQLEKDDVTLIEVPVEYIVGKVAAKDYIDESTGELICAANMELSLDLLAKLSQSGYKRIDTLFTNDLDHGPYMSETLRVDPTNDRLSALVEIYRMMRPGEPPTREAAENLFENLFFSEDRYDLSAVGRMKFNRSLMRDEIEGSGILSKNDIIEVMKKLIDIRNGKGEVDDIDHLGNRRIRSVGEMAENQFRVGLVRVERAVKERLSLGDLDMLMPQDMINAKPISAAVKEFFGSSQLSQFMDQNNPLSEITHKRRISALGPGGLTRERAGFEVRDVHPTHYGRVCPIETPEGPNIGLINSLSVYAQTNEYGFLETPYRRVRDGIVTDEIHYLSAIEEGNFVIAQANSNLDDEGRFVEDLVTCRSKGESSLFSRDQVDYMDVSTQQVVSVGASLIPFLEHDDANRALMGANMQRQAVPTLRADKPLVGTGMERAVAVDSGVTSVAKRGGMVQYVDASRIVIKVNEDEMFPGEAGIDIYNLTKYTRSNQNTCISQMPCVSLGEPIERGDVLADGPSTDLGELALGQNMRVAFMPWNGYNFEDSILVSERVVQEDRFTSIHIQELACVSRDTKLGPEEITADIPNVGEAALSKLDESGIVYIGAEVKGGDILVGKVTPKGETQLTPEEKLLRAIFGEKASDVKDSSLRVPNSVSGTVIDVQVFTRDGVEKDKRALEIEEMQLKQAKKDLTEELQILEAGLFARIHDVLVAGGVEAEKLEKLPRDRWLELGLADEAKQNQLEQLAEQYDELKAEFEKKLEAKRRKITQGDDLAPGVLKIVKVYLAVKRQIQPGDKMAGRHGNKGVISKINPIEDMPYDENGTPVDIVLNPLGVPSRMNIGQILETHLGMAAKGIGDKINAMLKQQQEVAKLREFIQRAYDLGDNTRQQVDLNTFSDDEVLRLAENLKKGLPVATPVFDGAKEREIKGLLELGGIPTSGQITLYDGRTGERFERQVTVGYMYMLKLNHLVDDKMHARSTGSYSLVTQQPLGGKAQFGGQRFGEMEVWALEAYGAAYTLQEMLTVKSDDVNGRTKMYKNIVDGSHQMEPGMPESFNVLLKEIRSLGINIELEDE</sequence>
<name>RPOB_EDWI9</name>
<gene>
    <name evidence="1" type="primary">rpoB</name>
    <name type="ordered locus">NT01EI_0174</name>
</gene>
<comment type="function">
    <text evidence="1">DNA-dependent RNA polymerase catalyzes the transcription of DNA into RNA using the four ribonucleoside triphosphates as substrates.</text>
</comment>
<comment type="catalytic activity">
    <reaction evidence="1">
        <text>RNA(n) + a ribonucleoside 5'-triphosphate = RNA(n+1) + diphosphate</text>
        <dbReference type="Rhea" id="RHEA:21248"/>
        <dbReference type="Rhea" id="RHEA-COMP:14527"/>
        <dbReference type="Rhea" id="RHEA-COMP:17342"/>
        <dbReference type="ChEBI" id="CHEBI:33019"/>
        <dbReference type="ChEBI" id="CHEBI:61557"/>
        <dbReference type="ChEBI" id="CHEBI:140395"/>
        <dbReference type="EC" id="2.7.7.6"/>
    </reaction>
</comment>
<comment type="subunit">
    <text evidence="1">The RNAP catalytic core consists of 2 alpha, 1 beta, 1 beta' and 1 omega subunit. When a sigma factor is associated with the core the holoenzyme is formed, which can initiate transcription.</text>
</comment>
<comment type="similarity">
    <text evidence="1">Belongs to the RNA polymerase beta chain family.</text>
</comment>
<keyword id="KW-0240">DNA-directed RNA polymerase</keyword>
<keyword id="KW-0548">Nucleotidyltransferase</keyword>
<keyword id="KW-0804">Transcription</keyword>
<keyword id="KW-0808">Transferase</keyword>
<organism>
    <name type="scientific">Edwardsiella ictaluri (strain 93-146)</name>
    <dbReference type="NCBI Taxonomy" id="634503"/>
    <lineage>
        <taxon>Bacteria</taxon>
        <taxon>Pseudomonadati</taxon>
        <taxon>Pseudomonadota</taxon>
        <taxon>Gammaproteobacteria</taxon>
        <taxon>Enterobacterales</taxon>
        <taxon>Hafniaceae</taxon>
        <taxon>Edwardsiella</taxon>
    </lineage>
</organism>